<protein>
    <recommendedName>
        <fullName evidence="1">Ubiquinone/menaquinone biosynthesis C-methyltransferase UbiE</fullName>
        <ecNumber evidence="1">2.1.1.163</ecNumber>
        <ecNumber evidence="1">2.1.1.201</ecNumber>
    </recommendedName>
    <alternativeName>
        <fullName evidence="1">2-methoxy-6-polyprenyl-1,4-benzoquinol methylase</fullName>
    </alternativeName>
    <alternativeName>
        <fullName evidence="1">Demethylmenaquinone methyltransferase</fullName>
    </alternativeName>
</protein>
<sequence length="243" mass="26999">MSETHFGFEKVDETEKAGKVAGVFHSVASKYDVMNDLMSGGMHRLWKMFTIAQAGVRPGHKVLDIAGGTGDLAKAFAKQAGPTGQVWLTDINESMLRVGRDRLLNKGIVTPVALCDAEKIPFPDNYFDLVTVAFGLRNMTHKEAALAEMRRVVKPGGKVMVLEFSKVWKPLEKAYDVYSFKVLPWLGQRVAGDAPSYRYLAESIRMHPDQVSLVRLMEHAGLENVEYFNLTAGVVALHVGRKY</sequence>
<feature type="chain" id="PRO_1000187751" description="Ubiquinone/menaquinone biosynthesis C-methyltransferase UbiE">
    <location>
        <begin position="1"/>
        <end position="243"/>
    </location>
</feature>
<feature type="binding site" evidence="1">
    <location>
        <position position="69"/>
    </location>
    <ligand>
        <name>S-adenosyl-L-methionine</name>
        <dbReference type="ChEBI" id="CHEBI:59789"/>
    </ligand>
</feature>
<feature type="binding site" evidence="1">
    <location>
        <position position="90"/>
    </location>
    <ligand>
        <name>S-adenosyl-L-methionine</name>
        <dbReference type="ChEBI" id="CHEBI:59789"/>
    </ligand>
</feature>
<feature type="binding site" evidence="1">
    <location>
        <begin position="116"/>
        <end position="117"/>
    </location>
    <ligand>
        <name>S-adenosyl-L-methionine</name>
        <dbReference type="ChEBI" id="CHEBI:59789"/>
    </ligand>
</feature>
<comment type="function">
    <text evidence="1">Methyltransferase required for the conversion of demethylmenaquinol (DMKH2) to menaquinol (MKH2) and the conversion of 2-polyprenyl-6-methoxy-1,4-benzoquinol (DDMQH2) to 2-polyprenyl-3-methyl-6-methoxy-1,4-benzoquinol (DMQH2).</text>
</comment>
<comment type="catalytic activity">
    <reaction evidence="1">
        <text>a 2-demethylmenaquinol + S-adenosyl-L-methionine = a menaquinol + S-adenosyl-L-homocysteine + H(+)</text>
        <dbReference type="Rhea" id="RHEA:42640"/>
        <dbReference type="Rhea" id="RHEA-COMP:9539"/>
        <dbReference type="Rhea" id="RHEA-COMP:9563"/>
        <dbReference type="ChEBI" id="CHEBI:15378"/>
        <dbReference type="ChEBI" id="CHEBI:18151"/>
        <dbReference type="ChEBI" id="CHEBI:55437"/>
        <dbReference type="ChEBI" id="CHEBI:57856"/>
        <dbReference type="ChEBI" id="CHEBI:59789"/>
        <dbReference type="EC" id="2.1.1.163"/>
    </reaction>
</comment>
<comment type="catalytic activity">
    <reaction evidence="1">
        <text>a 2-methoxy-6-(all-trans-polyprenyl)benzene-1,4-diol + S-adenosyl-L-methionine = a 5-methoxy-2-methyl-3-(all-trans-polyprenyl)benzene-1,4-diol + S-adenosyl-L-homocysteine + H(+)</text>
        <dbReference type="Rhea" id="RHEA:28286"/>
        <dbReference type="Rhea" id="RHEA-COMP:10858"/>
        <dbReference type="Rhea" id="RHEA-COMP:10859"/>
        <dbReference type="ChEBI" id="CHEBI:15378"/>
        <dbReference type="ChEBI" id="CHEBI:57856"/>
        <dbReference type="ChEBI" id="CHEBI:59789"/>
        <dbReference type="ChEBI" id="CHEBI:84166"/>
        <dbReference type="ChEBI" id="CHEBI:84167"/>
        <dbReference type="EC" id="2.1.1.201"/>
    </reaction>
</comment>
<comment type="pathway">
    <text evidence="1">Quinol/quinone metabolism; menaquinone biosynthesis; menaquinol from 1,4-dihydroxy-2-naphthoate: step 2/2.</text>
</comment>
<comment type="pathway">
    <text evidence="1">Cofactor biosynthesis; ubiquinone biosynthesis.</text>
</comment>
<comment type="similarity">
    <text evidence="1">Belongs to the class I-like SAM-binding methyltransferase superfamily. MenG/UbiE family.</text>
</comment>
<organism>
    <name type="scientific">Cupriavidus taiwanensis (strain DSM 17343 / BCRC 17206 / CCUG 44338 / CIP 107171 / LMG 19424 / R1)</name>
    <name type="common">Ralstonia taiwanensis (strain LMG 19424)</name>
    <dbReference type="NCBI Taxonomy" id="977880"/>
    <lineage>
        <taxon>Bacteria</taxon>
        <taxon>Pseudomonadati</taxon>
        <taxon>Pseudomonadota</taxon>
        <taxon>Betaproteobacteria</taxon>
        <taxon>Burkholderiales</taxon>
        <taxon>Burkholderiaceae</taxon>
        <taxon>Cupriavidus</taxon>
    </lineage>
</organism>
<reference key="1">
    <citation type="journal article" date="2008" name="Genome Res.">
        <title>Genome sequence of the beta-rhizobium Cupriavidus taiwanensis and comparative genomics of rhizobia.</title>
        <authorList>
            <person name="Amadou C."/>
            <person name="Pascal G."/>
            <person name="Mangenot S."/>
            <person name="Glew M."/>
            <person name="Bontemps C."/>
            <person name="Capela D."/>
            <person name="Carrere S."/>
            <person name="Cruveiller S."/>
            <person name="Dossat C."/>
            <person name="Lajus A."/>
            <person name="Marchetti M."/>
            <person name="Poinsot V."/>
            <person name="Rouy Z."/>
            <person name="Servin B."/>
            <person name="Saad M."/>
            <person name="Schenowitz C."/>
            <person name="Barbe V."/>
            <person name="Batut J."/>
            <person name="Medigue C."/>
            <person name="Masson-Boivin C."/>
        </authorList>
    </citation>
    <scope>NUCLEOTIDE SEQUENCE [LARGE SCALE GENOMIC DNA]</scope>
    <source>
        <strain>DSM 17343 / BCRC 17206 / CCUG 44338 / CIP 107171 / LMG 19424 / R1</strain>
    </source>
</reference>
<evidence type="ECO:0000255" key="1">
    <source>
        <dbReference type="HAMAP-Rule" id="MF_01813"/>
    </source>
</evidence>
<accession>B2AH07</accession>
<proteinExistence type="inferred from homology"/>
<keyword id="KW-0474">Menaquinone biosynthesis</keyword>
<keyword id="KW-0489">Methyltransferase</keyword>
<keyword id="KW-0949">S-adenosyl-L-methionine</keyword>
<keyword id="KW-0808">Transferase</keyword>
<keyword id="KW-0831">Ubiquinone biosynthesis</keyword>
<gene>
    <name evidence="1" type="primary">ubiE</name>
    <name type="ordered locus">RALTA_A0387</name>
</gene>
<dbReference type="EC" id="2.1.1.163" evidence="1"/>
<dbReference type="EC" id="2.1.1.201" evidence="1"/>
<dbReference type="EMBL" id="CU633749">
    <property type="protein sequence ID" value="CAP63056.1"/>
    <property type="molecule type" value="Genomic_DNA"/>
</dbReference>
<dbReference type="RefSeq" id="WP_012351721.1">
    <property type="nucleotide sequence ID" value="NC_010528.1"/>
</dbReference>
<dbReference type="SMR" id="B2AH07"/>
<dbReference type="GeneID" id="29761649"/>
<dbReference type="KEGG" id="cti:RALTA_A0387"/>
<dbReference type="eggNOG" id="COG2226">
    <property type="taxonomic scope" value="Bacteria"/>
</dbReference>
<dbReference type="HOGENOM" id="CLU_037990_0_0_4"/>
<dbReference type="BioCyc" id="CTAI977880:RALTA_RS01895-MONOMER"/>
<dbReference type="UniPathway" id="UPA00079">
    <property type="reaction ID" value="UER00169"/>
</dbReference>
<dbReference type="UniPathway" id="UPA00232"/>
<dbReference type="Proteomes" id="UP000001692">
    <property type="component" value="Chromosome 1"/>
</dbReference>
<dbReference type="GO" id="GO:0008425">
    <property type="term" value="F:2-methoxy-6-polyprenyl-1,4-benzoquinol methyltransferase activity"/>
    <property type="evidence" value="ECO:0007669"/>
    <property type="project" value="UniProtKB-UniRule"/>
</dbReference>
<dbReference type="GO" id="GO:0043770">
    <property type="term" value="F:demethylmenaquinone methyltransferase activity"/>
    <property type="evidence" value="ECO:0007669"/>
    <property type="project" value="UniProtKB-UniRule"/>
</dbReference>
<dbReference type="GO" id="GO:0009060">
    <property type="term" value="P:aerobic respiration"/>
    <property type="evidence" value="ECO:0007669"/>
    <property type="project" value="UniProtKB-UniRule"/>
</dbReference>
<dbReference type="GO" id="GO:0009234">
    <property type="term" value="P:menaquinone biosynthetic process"/>
    <property type="evidence" value="ECO:0007669"/>
    <property type="project" value="UniProtKB-UniRule"/>
</dbReference>
<dbReference type="GO" id="GO:0032259">
    <property type="term" value="P:methylation"/>
    <property type="evidence" value="ECO:0007669"/>
    <property type="project" value="UniProtKB-KW"/>
</dbReference>
<dbReference type="CDD" id="cd02440">
    <property type="entry name" value="AdoMet_MTases"/>
    <property type="match status" value="1"/>
</dbReference>
<dbReference type="Gene3D" id="3.40.50.150">
    <property type="entry name" value="Vaccinia Virus protein VP39"/>
    <property type="match status" value="1"/>
</dbReference>
<dbReference type="HAMAP" id="MF_01813">
    <property type="entry name" value="MenG_UbiE_methyltr"/>
    <property type="match status" value="1"/>
</dbReference>
<dbReference type="InterPro" id="IPR029063">
    <property type="entry name" value="SAM-dependent_MTases_sf"/>
</dbReference>
<dbReference type="InterPro" id="IPR004033">
    <property type="entry name" value="UbiE/COQ5_MeTrFase"/>
</dbReference>
<dbReference type="InterPro" id="IPR023576">
    <property type="entry name" value="UbiE/COQ5_MeTrFase_CS"/>
</dbReference>
<dbReference type="NCBIfam" id="TIGR01934">
    <property type="entry name" value="MenG_MenH_UbiE"/>
    <property type="match status" value="1"/>
</dbReference>
<dbReference type="NCBIfam" id="NF001240">
    <property type="entry name" value="PRK00216.1-1"/>
    <property type="match status" value="1"/>
</dbReference>
<dbReference type="PANTHER" id="PTHR43591:SF24">
    <property type="entry name" value="2-METHOXY-6-POLYPRENYL-1,4-BENZOQUINOL METHYLASE, MITOCHONDRIAL"/>
    <property type="match status" value="1"/>
</dbReference>
<dbReference type="PANTHER" id="PTHR43591">
    <property type="entry name" value="METHYLTRANSFERASE"/>
    <property type="match status" value="1"/>
</dbReference>
<dbReference type="Pfam" id="PF01209">
    <property type="entry name" value="Ubie_methyltran"/>
    <property type="match status" value="1"/>
</dbReference>
<dbReference type="SUPFAM" id="SSF53335">
    <property type="entry name" value="S-adenosyl-L-methionine-dependent methyltransferases"/>
    <property type="match status" value="1"/>
</dbReference>
<dbReference type="PROSITE" id="PS51608">
    <property type="entry name" value="SAM_MT_UBIE"/>
    <property type="match status" value="1"/>
</dbReference>
<dbReference type="PROSITE" id="PS01183">
    <property type="entry name" value="UBIE_1"/>
    <property type="match status" value="1"/>
</dbReference>
<dbReference type="PROSITE" id="PS01184">
    <property type="entry name" value="UBIE_2"/>
    <property type="match status" value="1"/>
</dbReference>
<name>UBIE_CUPTR</name>